<protein>
    <recommendedName>
        <fullName>Ribosome assembly protein RSM22, mitochondrial</fullName>
    </recommendedName>
</protein>
<reference key="1">
    <citation type="journal article" date="1994" name="Yeast">
        <title>DNA sequencing of a 36.2 kb fragment located between the FAS1 and LAP loci of chromosome XI of Saccharomyces cerevisiae.</title>
        <authorList>
            <person name="Vandenbol M."/>
            <person name="Bolle P.-A."/>
            <person name="Dion C."/>
            <person name="Portetelle D."/>
            <person name="Hilger F."/>
        </authorList>
    </citation>
    <scope>NUCLEOTIDE SEQUENCE [GENOMIC DNA]</scope>
    <source>
        <strain>ATCC 204508 / S288c</strain>
    </source>
</reference>
<reference key="2">
    <citation type="journal article" date="1994" name="Nature">
        <title>Complete DNA sequence of yeast chromosome XI.</title>
        <authorList>
            <person name="Dujon B."/>
            <person name="Alexandraki D."/>
            <person name="Andre B."/>
            <person name="Ansorge W."/>
            <person name="Baladron V."/>
            <person name="Ballesta J.P.G."/>
            <person name="Banrevi A."/>
            <person name="Bolle P.-A."/>
            <person name="Bolotin-Fukuhara M."/>
            <person name="Bossier P."/>
            <person name="Bou G."/>
            <person name="Boyer J."/>
            <person name="Buitrago M.J."/>
            <person name="Cheret G."/>
            <person name="Colleaux L."/>
            <person name="Daignan-Fornier B."/>
            <person name="del Rey F."/>
            <person name="Dion C."/>
            <person name="Domdey H."/>
            <person name="Duesterhoeft A."/>
            <person name="Duesterhus S."/>
            <person name="Entian K.-D."/>
            <person name="Erfle H."/>
            <person name="Esteban P.F."/>
            <person name="Feldmann H."/>
            <person name="Fernandes L."/>
            <person name="Fobo G.M."/>
            <person name="Fritz C."/>
            <person name="Fukuhara H."/>
            <person name="Gabel C."/>
            <person name="Gaillon L."/>
            <person name="Garcia-Cantalejo J.M."/>
            <person name="Garcia-Ramirez J.J."/>
            <person name="Gent M.E."/>
            <person name="Ghazvini M."/>
            <person name="Goffeau A."/>
            <person name="Gonzalez A."/>
            <person name="Grothues D."/>
            <person name="Guerreiro P."/>
            <person name="Hegemann J.H."/>
            <person name="Hewitt N."/>
            <person name="Hilger F."/>
            <person name="Hollenberg C.P."/>
            <person name="Horaitis O."/>
            <person name="Indge K.J."/>
            <person name="Jacquier A."/>
            <person name="James C.M."/>
            <person name="Jauniaux J.-C."/>
            <person name="Jimenez A."/>
            <person name="Keuchel H."/>
            <person name="Kirchrath L."/>
            <person name="Kleine K."/>
            <person name="Koetter P."/>
            <person name="Legrain P."/>
            <person name="Liebl S."/>
            <person name="Louis E.J."/>
            <person name="Maia e Silva A."/>
            <person name="Marck C."/>
            <person name="Monnier A.-L."/>
            <person name="Moestl D."/>
            <person name="Mueller S."/>
            <person name="Obermaier B."/>
            <person name="Oliver S.G."/>
            <person name="Pallier C."/>
            <person name="Pascolo S."/>
            <person name="Pfeiffer F."/>
            <person name="Philippsen P."/>
            <person name="Planta R.J."/>
            <person name="Pohl F.M."/>
            <person name="Pohl T.M."/>
            <person name="Poehlmann R."/>
            <person name="Portetelle D."/>
            <person name="Purnelle B."/>
            <person name="Puzos V."/>
            <person name="Ramezani Rad M."/>
            <person name="Rasmussen S.W."/>
            <person name="Remacha M.A."/>
            <person name="Revuelta J.L."/>
            <person name="Richard G.-F."/>
            <person name="Rieger M."/>
            <person name="Rodrigues-Pousada C."/>
            <person name="Rose M."/>
            <person name="Rupp T."/>
            <person name="Santos M.A."/>
            <person name="Schwager C."/>
            <person name="Sensen C."/>
            <person name="Skala J."/>
            <person name="Soares H."/>
            <person name="Sor F."/>
            <person name="Stegemann J."/>
            <person name="Tettelin H."/>
            <person name="Thierry A."/>
            <person name="Tzermia M."/>
            <person name="Urrestarazu L.A."/>
            <person name="van Dyck L."/>
            <person name="van Vliet-Reedijk J.C."/>
            <person name="Valens M."/>
            <person name="Vandenbol M."/>
            <person name="Vilela C."/>
            <person name="Vissers S."/>
            <person name="von Wettstein D."/>
            <person name="Voss H."/>
            <person name="Wiemann S."/>
            <person name="Xu G."/>
            <person name="Zimmermann J."/>
            <person name="Haasemann M."/>
            <person name="Becker I."/>
            <person name="Mewes H.-W."/>
        </authorList>
    </citation>
    <scope>NUCLEOTIDE SEQUENCE [LARGE SCALE GENOMIC DNA]</scope>
    <source>
        <strain>ATCC 204508 / S288c</strain>
    </source>
</reference>
<reference key="3">
    <citation type="journal article" date="2014" name="G3 (Bethesda)">
        <title>The reference genome sequence of Saccharomyces cerevisiae: Then and now.</title>
        <authorList>
            <person name="Engel S.R."/>
            <person name="Dietrich F.S."/>
            <person name="Fisk D.G."/>
            <person name="Binkley G."/>
            <person name="Balakrishnan R."/>
            <person name="Costanzo M.C."/>
            <person name="Dwight S.S."/>
            <person name="Hitz B.C."/>
            <person name="Karra K."/>
            <person name="Nash R.S."/>
            <person name="Weng S."/>
            <person name="Wong E.D."/>
            <person name="Lloyd P."/>
            <person name="Skrzypek M.S."/>
            <person name="Miyasato S.R."/>
            <person name="Simison M."/>
            <person name="Cherry J.M."/>
        </authorList>
    </citation>
    <scope>GENOME REANNOTATION</scope>
    <source>
        <strain>ATCC 204508 / S288c</strain>
    </source>
</reference>
<reference key="4">
    <citation type="journal article" date="2001" name="J. Biol. Chem.">
        <title>Identification of 12 new yeast mitochondrial ribosomal proteins including 6 that have no prokaryotic homologues.</title>
        <authorList>
            <person name="Saveanu C."/>
            <person name="Fromont-Racine M."/>
            <person name="Harington A."/>
            <person name="Ricard F."/>
            <person name="Namane A."/>
            <person name="Jacquier A."/>
        </authorList>
    </citation>
    <scope>SUBCELLULAR LOCATION</scope>
    <scope>IDENTIFICATION IN THE MITOCHONDRIAL RIBOSOMAL SMALL COMPLEX</scope>
    <scope>IDENTIFICATION BY MASS SPECTROMETRY</scope>
</reference>
<reference key="5">
    <citation type="journal article" date="2002" name="Eur. J. Biochem.">
        <title>Tag-mediated isolation of yeast mitochondrial ribosome and mass spectrometric identification of its new components.</title>
        <authorList>
            <person name="Gan X."/>
            <person name="Kitakawa M."/>
            <person name="Yoshino K."/>
            <person name="Oshiro N."/>
            <person name="Yonezawa K."/>
            <person name="Isono K."/>
        </authorList>
    </citation>
    <scope>IDENTIFICATION IN THE MITOCHONDRIAL RIBOSOMAL SMALL COMPLEX</scope>
    <scope>IDENTIFICATION BY MASS SPECTROMETRY</scope>
</reference>
<reference key="6">
    <citation type="journal article" date="2003" name="Nature">
        <title>Global analysis of protein localization in budding yeast.</title>
        <authorList>
            <person name="Huh W.-K."/>
            <person name="Falvo J.V."/>
            <person name="Gerke L.C."/>
            <person name="Carroll A.S."/>
            <person name="Howson R.W."/>
            <person name="Weissman J.S."/>
            <person name="O'Shea E.K."/>
        </authorList>
    </citation>
    <scope>SUBCELLULAR LOCATION [LARGE SCALE ANALYSIS]</scope>
</reference>
<reference key="7">
    <citation type="journal article" date="2003" name="Nature">
        <title>Global analysis of protein expression in yeast.</title>
        <authorList>
            <person name="Ghaemmaghami S."/>
            <person name="Huh W.-K."/>
            <person name="Bower K."/>
            <person name="Howson R.W."/>
            <person name="Belle A."/>
            <person name="Dephoure N."/>
            <person name="O'Shea E.K."/>
            <person name="Weissman J.S."/>
        </authorList>
    </citation>
    <scope>LEVEL OF PROTEIN EXPRESSION [LARGE SCALE ANALYSIS]</scope>
</reference>
<reference key="8">
    <citation type="journal article" date="2006" name="J. Proteome Res.">
        <title>Toward the complete yeast mitochondrial proteome: multidimensional separation techniques for mitochondrial proteomics.</title>
        <authorList>
            <person name="Reinders J."/>
            <person name="Zahedi R.P."/>
            <person name="Pfanner N."/>
            <person name="Meisinger C."/>
            <person name="Sickmann A."/>
        </authorList>
    </citation>
    <scope>SUBCELLULAR LOCATION [LARGE SCALE ANALYSIS]</scope>
    <scope>IDENTIFICATION BY MASS SPECTROMETRY</scope>
</reference>
<reference key="9">
    <citation type="journal article" date="2012" name="Bioinformatics">
        <title>How networks change with time.</title>
        <authorList>
            <person name="Park Y."/>
            <person name="Bader J.S."/>
        </authorList>
    </citation>
    <scope>IDENTIFICATION</scope>
</reference>
<reference key="10">
    <citation type="journal article" date="2014" name="PLoS Comput. Biol.">
        <title>Probabilistic approach to predicting substrate specificity of methyltransferases.</title>
        <authorList>
            <person name="Szczepinska T."/>
            <person name="Kutner J."/>
            <person name="Kopczynski M."/>
            <person name="Pawlowski K."/>
            <person name="Dziembowski A."/>
            <person name="Kudlicki A."/>
            <person name="Ginalski K."/>
            <person name="Rowicka M."/>
        </authorList>
    </citation>
    <scope>IDENTIFICATION</scope>
</reference>
<reference key="11">
    <citation type="journal article" date="2017" name="Science">
        <title>The structure of the yeast mitochondrial ribosome.</title>
        <authorList>
            <person name="Desai N."/>
            <person name="Brown A."/>
            <person name="Amunts A."/>
            <person name="Ramakrishnan V."/>
        </authorList>
    </citation>
    <scope>SHOWS THAT RSM22 IS NOT A CONSTITUENT OF THE MITOCHONDRIAL RIBOSOMAL SMALL COMPLEX</scope>
</reference>
<reference evidence="12 13 14" key="12">
    <citation type="journal article" date="2023" name="Nature">
        <title>Principles of mitoribosomal small subunit assembly in eukaryotes.</title>
        <authorList>
            <person name="Harper N.J."/>
            <person name="Burnside C."/>
            <person name="Klinge S."/>
        </authorList>
    </citation>
    <scope>STRUCTURE BY ELECTRON MICROSCOPY (2.60 ANGSTROMS) IN COMPLEX WITH THE MITOCHONDRIAL RIBOSOME AND IRON-SULFUR</scope>
    <scope>FUNCTION</scope>
    <scope>IRON-SULFUR BINDING</scope>
</reference>
<reference evidence="15" key="13">
    <citation type="journal article" date="2024" name="Mol. Cell">
        <title>METTL17 is an Fe-S cluster checkpoint for mitochondrial translation.</title>
        <authorList>
            <person name="Ast T."/>
            <person name="Itoh Y."/>
            <person name="Sadre S."/>
            <person name="McCoy J.G."/>
            <person name="Namkoong G."/>
            <person name="Wengrod J.C."/>
            <person name="Chicherin I."/>
            <person name="Joshi P.R."/>
            <person name="Kamenski P."/>
            <person name="Suess D.L.M."/>
            <person name="Amunts A."/>
            <person name="Mootha V.K."/>
        </authorList>
    </citation>
    <scope>STRUCTURE BY ELECTRON MICROSCOPY (2.57 ANGSTROMS) IN COMPLEX WITH IRON-SULFUR</scope>
    <scope>FUNCTION</scope>
    <scope>IRON-SULFUR BINDING</scope>
</reference>
<feature type="transit peptide" description="Mitochondrion" evidence="2">
    <location>
        <begin position="1"/>
        <end position="15"/>
    </location>
</feature>
<feature type="chain" id="PRO_0000203144" description="Ribosome assembly protein RSM22, mitochondrial">
    <location>
        <begin position="16"/>
        <end position="628"/>
    </location>
</feature>
<feature type="binding site" evidence="9 10 12 13 14 15">
    <location>
        <position position="373"/>
    </location>
    <ligand>
        <name>[4Fe-4S] cluster</name>
        <dbReference type="ChEBI" id="CHEBI:49883"/>
    </ligand>
</feature>
<feature type="binding site" evidence="9 10 12 13 14 15">
    <location>
        <position position="379"/>
    </location>
    <ligand>
        <name>[4Fe-4S] cluster</name>
        <dbReference type="ChEBI" id="CHEBI:49883"/>
    </ligand>
</feature>
<feature type="binding site" evidence="9 10 12 13 14 15">
    <location>
        <position position="400"/>
    </location>
    <ligand>
        <name>[4Fe-4S] cluster</name>
        <dbReference type="ChEBI" id="CHEBI:49883"/>
    </ligand>
</feature>
<feature type="binding site" evidence="9 10 12 13 14 15">
    <location>
        <position position="513"/>
    </location>
    <ligand>
        <name>[4Fe-4S] cluster</name>
        <dbReference type="ChEBI" id="CHEBI:49883"/>
    </ligand>
</feature>
<feature type="helix" evidence="17">
    <location>
        <begin position="66"/>
        <end position="71"/>
    </location>
</feature>
<feature type="helix" evidence="17">
    <location>
        <begin position="82"/>
        <end position="91"/>
    </location>
</feature>
<feature type="turn" evidence="17">
    <location>
        <begin position="92"/>
        <end position="95"/>
    </location>
</feature>
<feature type="helix" evidence="17">
    <location>
        <begin position="98"/>
        <end position="110"/>
    </location>
</feature>
<feature type="helix" evidence="17">
    <location>
        <begin position="125"/>
        <end position="134"/>
    </location>
</feature>
<feature type="helix" evidence="17">
    <location>
        <begin position="136"/>
        <end position="153"/>
    </location>
</feature>
<feature type="helix" evidence="17">
    <location>
        <begin position="155"/>
        <end position="158"/>
    </location>
</feature>
<feature type="strand" evidence="17">
    <location>
        <begin position="163"/>
        <end position="172"/>
    </location>
</feature>
<feature type="helix" evidence="17">
    <location>
        <begin position="174"/>
        <end position="182"/>
    </location>
</feature>
<feature type="strand" evidence="17">
    <location>
        <begin position="189"/>
        <end position="195"/>
    </location>
</feature>
<feature type="helix" evidence="17">
    <location>
        <begin position="200"/>
        <end position="210"/>
    </location>
</feature>
<feature type="strand" evidence="17">
    <location>
        <begin position="257"/>
        <end position="262"/>
    </location>
</feature>
<feature type="strand" evidence="17">
    <location>
        <begin position="269"/>
        <end position="276"/>
    </location>
</feature>
<feature type="strand" evidence="17">
    <location>
        <begin position="282"/>
        <end position="284"/>
    </location>
</feature>
<feature type="helix" evidence="17">
    <location>
        <begin position="285"/>
        <end position="297"/>
    </location>
</feature>
<feature type="strand" evidence="17">
    <location>
        <begin position="300"/>
        <end position="309"/>
    </location>
</feature>
<feature type="helix" evidence="17">
    <location>
        <begin position="314"/>
        <end position="328"/>
    </location>
</feature>
<feature type="helix" evidence="17">
    <location>
        <begin position="330"/>
        <end position="332"/>
    </location>
</feature>
<feature type="strand" evidence="17">
    <location>
        <begin position="367"/>
        <end position="372"/>
    </location>
</feature>
<feature type="strand" evidence="16">
    <location>
        <begin position="374"/>
        <end position="377"/>
    </location>
</feature>
<feature type="helix" evidence="17">
    <location>
        <begin position="386"/>
        <end position="390"/>
    </location>
</feature>
<feature type="strand" evidence="17">
    <location>
        <begin position="391"/>
        <end position="394"/>
    </location>
</feature>
<feature type="strand" evidence="17">
    <location>
        <begin position="402"/>
        <end position="407"/>
    </location>
</feature>
<feature type="helix" evidence="17">
    <location>
        <begin position="410"/>
        <end position="415"/>
    </location>
</feature>
<feature type="helix" evidence="17">
    <location>
        <begin position="418"/>
        <end position="421"/>
    </location>
</feature>
<feature type="strand" evidence="17">
    <location>
        <begin position="445"/>
        <end position="451"/>
    </location>
</feature>
<feature type="strand" evidence="17">
    <location>
        <begin position="453"/>
        <end position="458"/>
    </location>
</feature>
<feature type="helix" evidence="17">
    <location>
        <begin position="463"/>
        <end position="475"/>
    </location>
</feature>
<feature type="turn" evidence="17">
    <location>
        <begin position="491"/>
        <end position="493"/>
    </location>
</feature>
<feature type="strand" evidence="17">
    <location>
        <begin position="502"/>
        <end position="504"/>
    </location>
</feature>
<feature type="strand" evidence="17">
    <location>
        <begin position="507"/>
        <end position="513"/>
    </location>
</feature>
<feature type="strand" evidence="17">
    <location>
        <begin position="517"/>
        <end position="525"/>
    </location>
</feature>
<feature type="turn" evidence="17">
    <location>
        <begin position="526"/>
        <end position="528"/>
    </location>
</feature>
<feature type="helix" evidence="17">
    <location>
        <begin position="530"/>
        <end position="536"/>
    </location>
</feature>
<feature type="strand" evidence="17">
    <location>
        <begin position="550"/>
        <end position="554"/>
    </location>
</feature>
<feature type="helix" evidence="17">
    <location>
        <begin position="556"/>
        <end position="558"/>
    </location>
</feature>
<feature type="turn" evidence="17">
    <location>
        <begin position="559"/>
        <end position="561"/>
    </location>
</feature>
<feature type="helix" evidence="17">
    <location>
        <begin position="575"/>
        <end position="589"/>
    </location>
</feature>
<keyword id="KW-0002">3D-structure</keyword>
<keyword id="KW-0408">Iron</keyword>
<keyword id="KW-0411">Iron-sulfur</keyword>
<keyword id="KW-0479">Metal-binding</keyword>
<keyword id="KW-0496">Mitochondrion</keyword>
<keyword id="KW-1185">Reference proteome</keyword>
<keyword id="KW-0809">Transit peptide</keyword>
<proteinExistence type="evidence at protein level"/>
<comment type="function">
    <text evidence="1 9 10">Mitochondrial ribosome (mitoribosome) assembly factor (PubMed:36482135, PubMed:38199006). Binds at the interface of the head and body domains of the mitochondrial small ribosomal subunit (mt-SSU), occluding the mRNA channel and preventing compaction of the head domain towards the body (PubMed:36482135). Probable inactive methyltransferase: retains the characteristic folding and ability to bind S-adenosyl-L-methionine, but it probably lost its methyltransferase activity (By similarity).</text>
</comment>
<comment type="subunit">
    <text evidence="3 4 8">Associates with the mitochondrial ribosome (mitoribosome) (PubMed:11278769, PubMed:12392552). Only transiently interacts with the mitoribosome (PubMed:28154081).</text>
</comment>
<comment type="subcellular location">
    <subcellularLocation>
        <location evidence="3 5 7">Mitochondrion</location>
    </subcellularLocation>
</comment>
<comment type="miscellaneous">
    <text evidence="6">Present with 1900 molecules/cell in log phase SD medium.</text>
</comment>
<comment type="similarity">
    <text evidence="11">Belongs to the methyltransferase superfamily. Rsm22 family.</text>
</comment>
<sequence>MMKRCFSILPQNVRFSSKFTSLNLPKLDLADFIDSNKRGINVLPSYRDETASTTQATNSKELRLLSKTLQGQSYRDQLELNPDVSKAINNNIMAVHIPNNLRRVATNYYKEIQEPNSLHRPCRTKMEVDAHIASIFLQNYGSIFQSLKELQKRVGPDNFKPQRILDVGYGPATGIVALNDILGPNYRPDLKDAVILGNAEMQERAKIILSRQLNEVVDTVEENVSTEKEQETDRRNKNFQEDEHIGEVMTKKINIMTNLRSSIPASKEYDLIILTHQLLHDGNQFPIQVDENIEHYLNILAPGGHIVIIERGNPMGFEIIARARQITLRPENFPDEFGKIPRPWSRGVTVRGKKDAELGNISSNYFLKVIAPCPHQRKCPLQVGNPNFYTHKEGKDLKFCNFQKSIKRPKFSIELKKGKLLATSWDGSQGNASRLKGTGRRNGRDYEILNYSYLIFERSHKDENTLKEIKKLRNENVNGKYDIGSLGDDTQNSWPRIINDPVKRKGHVMMDLCAPSGELEKWTVSRSFSKQIYHDARKSKKGDLWASAAKTQIKGLGDLNVKKFHKLEKERIKQLKKEERQKARKAMESYNELEDSLQFDDHQFSNFEVMKKLSTFHGNDFLQHVNRK</sequence>
<dbReference type="EMBL" id="Z26877">
    <property type="protein sequence ID" value="CAA81498.1"/>
    <property type="molecule type" value="Genomic_DNA"/>
</dbReference>
<dbReference type="EMBL" id="Z28155">
    <property type="protein sequence ID" value="CAA81996.1"/>
    <property type="molecule type" value="Genomic_DNA"/>
</dbReference>
<dbReference type="EMBL" id="BK006944">
    <property type="protein sequence ID" value="DAA09009.1"/>
    <property type="molecule type" value="Genomic_DNA"/>
</dbReference>
<dbReference type="PIR" id="S37795">
    <property type="entry name" value="S37795"/>
</dbReference>
<dbReference type="RefSeq" id="NP_012767.1">
    <property type="nucleotide sequence ID" value="NM_001179721.1"/>
</dbReference>
<dbReference type="PDB" id="8D8J">
    <property type="method" value="EM"/>
    <property type="resolution" value="3.80 A"/>
    <property type="chains" value="0=1-628"/>
</dbReference>
<dbReference type="PDB" id="8D8K">
    <property type="method" value="EM"/>
    <property type="resolution" value="3.13 A"/>
    <property type="chains" value="0=1-628"/>
</dbReference>
<dbReference type="PDB" id="8D8L">
    <property type="method" value="EM"/>
    <property type="resolution" value="2.60 A"/>
    <property type="chains" value="0=1-628"/>
</dbReference>
<dbReference type="PDB" id="8OM2">
    <property type="method" value="EM"/>
    <property type="resolution" value="2.57 A"/>
    <property type="chains" value="c=1-628"/>
</dbReference>
<dbReference type="PDBsum" id="8D8J"/>
<dbReference type="PDBsum" id="8D8K"/>
<dbReference type="PDBsum" id="8D8L"/>
<dbReference type="PDBsum" id="8OM2"/>
<dbReference type="EMDB" id="EMD-16966"/>
<dbReference type="EMDB" id="EMD-27249"/>
<dbReference type="EMDB" id="EMD-27250"/>
<dbReference type="EMDB" id="EMD-27251"/>
<dbReference type="SASBDB" id="P36056"/>
<dbReference type="SMR" id="P36056"/>
<dbReference type="BioGRID" id="33982">
    <property type="interactions" value="132"/>
</dbReference>
<dbReference type="DIP" id="DIP-756N"/>
<dbReference type="FunCoup" id="P36056">
    <property type="interactions" value="387"/>
</dbReference>
<dbReference type="IntAct" id="P36056">
    <property type="interactions" value="39"/>
</dbReference>
<dbReference type="MINT" id="P36056"/>
<dbReference type="STRING" id="4932.YKL155C"/>
<dbReference type="iPTMnet" id="P36056"/>
<dbReference type="PaxDb" id="4932-YKL155C"/>
<dbReference type="PeptideAtlas" id="P36056"/>
<dbReference type="EnsemblFungi" id="YKL155C_mRNA">
    <property type="protein sequence ID" value="YKL155C"/>
    <property type="gene ID" value="YKL155C"/>
</dbReference>
<dbReference type="GeneID" id="853701"/>
<dbReference type="KEGG" id="sce:YKL155C"/>
<dbReference type="AGR" id="SGD:S000001638"/>
<dbReference type="SGD" id="S000001638">
    <property type="gene designation" value="RSM22"/>
</dbReference>
<dbReference type="VEuPathDB" id="FungiDB:YKL155C"/>
<dbReference type="eggNOG" id="KOG2539">
    <property type="taxonomic scope" value="Eukaryota"/>
</dbReference>
<dbReference type="GeneTree" id="ENSGT00940000175583"/>
<dbReference type="HOGENOM" id="CLU_024759_0_0_1"/>
<dbReference type="InParanoid" id="P36056"/>
<dbReference type="OMA" id="HRKCPLQ"/>
<dbReference type="OrthoDB" id="421327at2759"/>
<dbReference type="BioCyc" id="YEAST:G3O-31925-MONOMER"/>
<dbReference type="BioGRID-ORCS" id="853701">
    <property type="hits" value="0 hits in 10 CRISPR screens"/>
</dbReference>
<dbReference type="PRO" id="PR:P36056"/>
<dbReference type="Proteomes" id="UP000002311">
    <property type="component" value="Chromosome XI"/>
</dbReference>
<dbReference type="RNAct" id="P36056">
    <property type="molecule type" value="protein"/>
</dbReference>
<dbReference type="GO" id="GO:0005763">
    <property type="term" value="C:mitochondrial small ribosomal subunit"/>
    <property type="evidence" value="ECO:0000314"/>
    <property type="project" value="SGD"/>
</dbReference>
<dbReference type="GO" id="GO:0005739">
    <property type="term" value="C:mitochondrion"/>
    <property type="evidence" value="ECO:0007005"/>
    <property type="project" value="SGD"/>
</dbReference>
<dbReference type="GO" id="GO:0051539">
    <property type="term" value="F:4 iron, 4 sulfur cluster binding"/>
    <property type="evidence" value="ECO:0000314"/>
    <property type="project" value="UniProtKB"/>
</dbReference>
<dbReference type="GO" id="GO:0046872">
    <property type="term" value="F:metal ion binding"/>
    <property type="evidence" value="ECO:0007669"/>
    <property type="project" value="UniProtKB-KW"/>
</dbReference>
<dbReference type="GO" id="GO:0008168">
    <property type="term" value="F:methyltransferase activity"/>
    <property type="evidence" value="ECO:0007669"/>
    <property type="project" value="InterPro"/>
</dbReference>
<dbReference type="GO" id="GO:0003735">
    <property type="term" value="F:structural constituent of ribosome"/>
    <property type="evidence" value="ECO:0000314"/>
    <property type="project" value="SGD"/>
</dbReference>
<dbReference type="GO" id="GO:0180026">
    <property type="term" value="P:mitochondrial small ribosomal subunit assembly"/>
    <property type="evidence" value="ECO:0000314"/>
    <property type="project" value="UniProtKB"/>
</dbReference>
<dbReference type="GO" id="GO:0032543">
    <property type="term" value="P:mitochondrial translation"/>
    <property type="evidence" value="ECO:0000305"/>
    <property type="project" value="SGD"/>
</dbReference>
<dbReference type="InterPro" id="IPR052571">
    <property type="entry name" value="Mt_RNA_Methyltransferase"/>
</dbReference>
<dbReference type="InterPro" id="IPR015324">
    <property type="entry name" value="Ribosomal_Rsm22-like"/>
</dbReference>
<dbReference type="InterPro" id="IPR016522">
    <property type="entry name" value="RSM22_mit_bud"/>
</dbReference>
<dbReference type="InterPro" id="IPR029063">
    <property type="entry name" value="SAM-dependent_MTases_sf"/>
</dbReference>
<dbReference type="PANTHER" id="PTHR13184">
    <property type="entry name" value="37S RIBOSOMAL PROTEIN S22"/>
    <property type="match status" value="1"/>
</dbReference>
<dbReference type="PANTHER" id="PTHR13184:SF5">
    <property type="entry name" value="METHYLTRANSFERASE-LIKE PROTEIN 17, MITOCHONDRIAL"/>
    <property type="match status" value="1"/>
</dbReference>
<dbReference type="Pfam" id="PF09243">
    <property type="entry name" value="Rsm22"/>
    <property type="match status" value="2"/>
</dbReference>
<dbReference type="PIRSF" id="PIRSF007797">
    <property type="entry name" value="RSM22"/>
    <property type="match status" value="1"/>
</dbReference>
<dbReference type="SUPFAM" id="SSF53335">
    <property type="entry name" value="S-adenosyl-L-methionine-dependent methyltransferases"/>
    <property type="match status" value="1"/>
</dbReference>
<gene>
    <name type="primary">RSM22</name>
    <name type="ordered locus">YKL155C</name>
    <name type="ORF">YKL610</name>
</gene>
<name>RT22_YEAST</name>
<evidence type="ECO:0000250" key="1">
    <source>
        <dbReference type="UniProtKB" id="Q9H7H0"/>
    </source>
</evidence>
<evidence type="ECO:0000255" key="2"/>
<evidence type="ECO:0000269" key="3">
    <source>
    </source>
</evidence>
<evidence type="ECO:0000269" key="4">
    <source>
    </source>
</evidence>
<evidence type="ECO:0000269" key="5">
    <source>
    </source>
</evidence>
<evidence type="ECO:0000269" key="6">
    <source>
    </source>
</evidence>
<evidence type="ECO:0000269" key="7">
    <source>
    </source>
</evidence>
<evidence type="ECO:0000269" key="8">
    <source>
    </source>
</evidence>
<evidence type="ECO:0000269" key="9">
    <source>
    </source>
</evidence>
<evidence type="ECO:0000269" key="10">
    <source>
    </source>
</evidence>
<evidence type="ECO:0000305" key="11"/>
<evidence type="ECO:0007744" key="12">
    <source>
        <dbReference type="PDB" id="8D8J"/>
    </source>
</evidence>
<evidence type="ECO:0007744" key="13">
    <source>
        <dbReference type="PDB" id="8D8K"/>
    </source>
</evidence>
<evidence type="ECO:0007744" key="14">
    <source>
        <dbReference type="PDB" id="8D8L"/>
    </source>
</evidence>
<evidence type="ECO:0007744" key="15">
    <source>
        <dbReference type="PDB" id="8OM2"/>
    </source>
</evidence>
<evidence type="ECO:0007829" key="16">
    <source>
        <dbReference type="PDB" id="8D8K"/>
    </source>
</evidence>
<evidence type="ECO:0007829" key="17">
    <source>
        <dbReference type="PDB" id="8D8L"/>
    </source>
</evidence>
<organism>
    <name type="scientific">Saccharomyces cerevisiae (strain ATCC 204508 / S288c)</name>
    <name type="common">Baker's yeast</name>
    <dbReference type="NCBI Taxonomy" id="559292"/>
    <lineage>
        <taxon>Eukaryota</taxon>
        <taxon>Fungi</taxon>
        <taxon>Dikarya</taxon>
        <taxon>Ascomycota</taxon>
        <taxon>Saccharomycotina</taxon>
        <taxon>Saccharomycetes</taxon>
        <taxon>Saccharomycetales</taxon>
        <taxon>Saccharomycetaceae</taxon>
        <taxon>Saccharomyces</taxon>
    </lineage>
</organism>
<accession>P36056</accession>
<accession>D6VX43</accession>